<proteinExistence type="evidence at protein level"/>
<organism>
    <name type="scientific">Thermococcus kodakarensis (strain ATCC BAA-918 / JCM 12380 / KOD1)</name>
    <name type="common">Pyrococcus kodakaraensis (strain KOD1)</name>
    <dbReference type="NCBI Taxonomy" id="69014"/>
    <lineage>
        <taxon>Archaea</taxon>
        <taxon>Methanobacteriati</taxon>
        <taxon>Methanobacteriota</taxon>
        <taxon>Thermococci</taxon>
        <taxon>Thermococcales</taxon>
        <taxon>Thermococcaceae</taxon>
        <taxon>Thermococcus</taxon>
    </lineage>
</organism>
<dbReference type="EC" id="5.3.1.24"/>
<dbReference type="EMBL" id="AB030011">
    <property type="protein sequence ID" value="BAA82549.1"/>
    <property type="molecule type" value="Genomic_DNA"/>
</dbReference>
<dbReference type="EMBL" id="AP006878">
    <property type="protein sequence ID" value="BAD84445.1"/>
    <property type="molecule type" value="Genomic_DNA"/>
</dbReference>
<dbReference type="PIR" id="T43926">
    <property type="entry name" value="T43926"/>
</dbReference>
<dbReference type="RefSeq" id="WP_011249211.1">
    <property type="nucleotide sequence ID" value="NC_006624.1"/>
</dbReference>
<dbReference type="PDB" id="5LHE">
    <property type="method" value="X-ray"/>
    <property type="resolution" value="1.85 A"/>
    <property type="chains" value="A=2-208"/>
</dbReference>
<dbReference type="PDB" id="5LHF">
    <property type="method" value="X-ray"/>
    <property type="resolution" value="1.75 A"/>
    <property type="chains" value="A/B=1-208"/>
</dbReference>
<dbReference type="PDBsum" id="5LHE"/>
<dbReference type="PDBsum" id="5LHF"/>
<dbReference type="SMR" id="Q9YGB1"/>
<dbReference type="FunCoup" id="Q9YGB1">
    <property type="interactions" value="60"/>
</dbReference>
<dbReference type="STRING" id="69014.TK0256"/>
<dbReference type="EnsemblBacteria" id="BAD84445">
    <property type="protein sequence ID" value="BAD84445"/>
    <property type="gene ID" value="TK0256"/>
</dbReference>
<dbReference type="GeneID" id="78446759"/>
<dbReference type="KEGG" id="tko:TK0256"/>
<dbReference type="PATRIC" id="fig|69014.16.peg.255"/>
<dbReference type="eggNOG" id="arCOG01983">
    <property type="taxonomic scope" value="Archaea"/>
</dbReference>
<dbReference type="HOGENOM" id="CLU_076364_2_1_2"/>
<dbReference type="InParanoid" id="Q9YGB1"/>
<dbReference type="OrthoDB" id="27513at2157"/>
<dbReference type="PhylomeDB" id="Q9YGB1"/>
<dbReference type="BRENDA" id="5.3.1.24">
    <property type="organism ID" value="5246"/>
</dbReference>
<dbReference type="UniPathway" id="UPA00035">
    <property type="reaction ID" value="UER00042"/>
</dbReference>
<dbReference type="Proteomes" id="UP000000536">
    <property type="component" value="Chromosome"/>
</dbReference>
<dbReference type="GO" id="GO:0004640">
    <property type="term" value="F:phosphoribosylanthranilate isomerase activity"/>
    <property type="evidence" value="ECO:0000318"/>
    <property type="project" value="GO_Central"/>
</dbReference>
<dbReference type="GO" id="GO:0000162">
    <property type="term" value="P:L-tryptophan biosynthetic process"/>
    <property type="evidence" value="ECO:0000318"/>
    <property type="project" value="GO_Central"/>
</dbReference>
<dbReference type="CDD" id="cd00405">
    <property type="entry name" value="PRAI"/>
    <property type="match status" value="1"/>
</dbReference>
<dbReference type="Gene3D" id="3.20.20.70">
    <property type="entry name" value="Aldolase class I"/>
    <property type="match status" value="1"/>
</dbReference>
<dbReference type="HAMAP" id="MF_00135">
    <property type="entry name" value="PRAI"/>
    <property type="match status" value="1"/>
</dbReference>
<dbReference type="InterPro" id="IPR013785">
    <property type="entry name" value="Aldolase_TIM"/>
</dbReference>
<dbReference type="InterPro" id="IPR001240">
    <property type="entry name" value="PRAI_dom"/>
</dbReference>
<dbReference type="InterPro" id="IPR011060">
    <property type="entry name" value="RibuloseP-bd_barrel"/>
</dbReference>
<dbReference type="InterPro" id="IPR044643">
    <property type="entry name" value="TrpF_fam"/>
</dbReference>
<dbReference type="NCBIfam" id="NF002304">
    <property type="entry name" value="PRK01222.2-4"/>
    <property type="match status" value="1"/>
</dbReference>
<dbReference type="PANTHER" id="PTHR42894">
    <property type="entry name" value="N-(5'-PHOSPHORIBOSYL)ANTHRANILATE ISOMERASE"/>
    <property type="match status" value="1"/>
</dbReference>
<dbReference type="PANTHER" id="PTHR42894:SF1">
    <property type="entry name" value="N-(5'-PHOSPHORIBOSYL)ANTHRANILATE ISOMERASE"/>
    <property type="match status" value="1"/>
</dbReference>
<dbReference type="Pfam" id="PF00697">
    <property type="entry name" value="PRAI"/>
    <property type="match status" value="1"/>
</dbReference>
<dbReference type="SUPFAM" id="SSF51366">
    <property type="entry name" value="Ribulose-phoshate binding barrel"/>
    <property type="match status" value="1"/>
</dbReference>
<reference key="1">
    <citation type="journal article" date="1999" name="Mol. Gen. Genet.">
        <title>The tryptophan biosynthesis gene cluster trpCDEGFBA from Pyrococcus kodakaraensis KOD1 is regulated at the transcriptional level and expressed as a single mRNA.</title>
        <authorList>
            <person name="Tang X."/>
            <person name="Ezaki S."/>
            <person name="Fujiwara S."/>
            <person name="Takagi M."/>
            <person name="Atomi H."/>
            <person name="Imanaka T."/>
        </authorList>
    </citation>
    <scope>NUCLEOTIDE SEQUENCE [GENOMIC DNA]</scope>
    <source>
        <strain>ATCC BAA-918 / JCM 12380 / KOD1</strain>
    </source>
</reference>
<reference key="2">
    <citation type="journal article" date="2005" name="Genome Res.">
        <title>Complete genome sequence of the hyperthermophilic archaeon Thermococcus kodakaraensis KOD1 and comparison with Pyrococcus genomes.</title>
        <authorList>
            <person name="Fukui T."/>
            <person name="Atomi H."/>
            <person name="Kanai T."/>
            <person name="Matsumi R."/>
            <person name="Fujiwara S."/>
            <person name="Imanaka T."/>
        </authorList>
    </citation>
    <scope>NUCLEOTIDE SEQUENCE [LARGE SCALE GENOMIC DNA]</scope>
    <source>
        <strain>ATCC BAA-918 / JCM 12380 / KOD1</strain>
    </source>
</reference>
<name>TRPF_THEKO</name>
<feature type="chain" id="PRO_0000154413" description="N-(5'-phosphoribosyl)anthranilate isomerase">
    <location>
        <begin position="1"/>
        <end position="208"/>
    </location>
</feature>
<feature type="strand" evidence="3">
    <location>
        <begin position="4"/>
        <end position="8"/>
    </location>
</feature>
<feature type="helix" evidence="3">
    <location>
        <begin position="13"/>
        <end position="19"/>
    </location>
</feature>
<feature type="turn" evidence="3">
    <location>
        <begin position="20"/>
        <end position="22"/>
    </location>
</feature>
<feature type="strand" evidence="3">
    <location>
        <begin position="24"/>
        <end position="29"/>
    </location>
</feature>
<feature type="strand" evidence="3">
    <location>
        <begin position="31"/>
        <end position="33"/>
    </location>
</feature>
<feature type="helix" evidence="3">
    <location>
        <begin position="40"/>
        <end position="49"/>
    </location>
</feature>
<feature type="strand" evidence="3">
    <location>
        <begin position="54"/>
        <end position="58"/>
    </location>
</feature>
<feature type="helix" evidence="3">
    <location>
        <begin position="63"/>
        <end position="73"/>
    </location>
</feature>
<feature type="strand" evidence="3">
    <location>
        <begin position="76"/>
        <end position="80"/>
    </location>
</feature>
<feature type="helix" evidence="3">
    <location>
        <begin position="86"/>
        <end position="96"/>
    </location>
</feature>
<feature type="strand" evidence="3">
    <location>
        <begin position="99"/>
        <end position="105"/>
    </location>
</feature>
<feature type="strand" evidence="2">
    <location>
        <begin position="110"/>
        <end position="112"/>
    </location>
</feature>
<feature type="helix" evidence="3">
    <location>
        <begin position="113"/>
        <end position="125"/>
    </location>
</feature>
<feature type="strand" evidence="3">
    <location>
        <begin position="130"/>
        <end position="135"/>
    </location>
</feature>
<feature type="helix" evidence="3">
    <location>
        <begin position="139"/>
        <end position="141"/>
    </location>
</feature>
<feature type="helix" evidence="3">
    <location>
        <begin position="142"/>
        <end position="155"/>
    </location>
</feature>
<feature type="strand" evidence="3">
    <location>
        <begin position="159"/>
        <end position="163"/>
    </location>
</feature>
<feature type="turn" evidence="3">
    <location>
        <begin position="166"/>
        <end position="168"/>
    </location>
</feature>
<feature type="helix" evidence="3">
    <location>
        <begin position="169"/>
        <end position="176"/>
    </location>
</feature>
<feature type="strand" evidence="3">
    <location>
        <begin position="179"/>
        <end position="184"/>
    </location>
</feature>
<feature type="helix" evidence="3">
    <location>
        <begin position="185"/>
        <end position="187"/>
    </location>
</feature>
<feature type="helix" evidence="3">
    <location>
        <begin position="195"/>
        <end position="206"/>
    </location>
</feature>
<protein>
    <recommendedName>
        <fullName>N-(5'-phosphoribosyl)anthranilate isomerase</fullName>
        <shortName>PRAI</shortName>
        <ecNumber>5.3.1.24</ecNumber>
    </recommendedName>
</protein>
<gene>
    <name type="primary">trpF</name>
    <name type="ordered locus">TK0256</name>
</gene>
<evidence type="ECO:0000305" key="1"/>
<evidence type="ECO:0007829" key="2">
    <source>
        <dbReference type="PDB" id="5LHE"/>
    </source>
</evidence>
<evidence type="ECO:0007829" key="3">
    <source>
        <dbReference type="PDB" id="5LHF"/>
    </source>
</evidence>
<accession>Q9YGB1</accession>
<keyword id="KW-0002">3D-structure</keyword>
<keyword id="KW-0028">Amino-acid biosynthesis</keyword>
<keyword id="KW-0057">Aromatic amino acid biosynthesis</keyword>
<keyword id="KW-0413">Isomerase</keyword>
<keyword id="KW-1185">Reference proteome</keyword>
<keyword id="KW-0822">Tryptophan biosynthesis</keyword>
<sequence>MVEFVKICGVKTMDELRLVERYADATGVVVNSRSKRKVPLKTAAELIEMAEIPIYLVSTMKTFPEWANAVEKTGAEYIQVHSDMHPKAVNRLKDEYGVSVMKAFMVPRESDDPAEDAERLLELIGQYEVDKILLDTGVGSGRRHDYRVSAIIAKEYPIVLAGGLTPENVGEAIRWVKPAGVDVSSGVERNGVKDRVLIEAFMAVVRNG</sequence>
<comment type="catalytic activity">
    <reaction>
        <text>N-(5-phospho-beta-D-ribosyl)anthranilate = 1-(2-carboxyphenylamino)-1-deoxy-D-ribulose 5-phosphate</text>
        <dbReference type="Rhea" id="RHEA:21540"/>
        <dbReference type="ChEBI" id="CHEBI:18277"/>
        <dbReference type="ChEBI" id="CHEBI:58613"/>
        <dbReference type="EC" id="5.3.1.24"/>
    </reaction>
</comment>
<comment type="pathway">
    <text>Amino-acid biosynthesis; L-tryptophan biosynthesis; L-tryptophan from chorismate: step 3/5.</text>
</comment>
<comment type="similarity">
    <text evidence="1">Belongs to the TrpF family.</text>
</comment>